<name>AROB_STAAE</name>
<gene>
    <name evidence="1" type="primary">aroB</name>
    <name type="ordered locus">NWMN_1376</name>
</gene>
<sequence>MKLQTTYPSNNYPIYVEHGAIDHISTYIDQFDQSFILIDEHVNQYFADKFDDILSYENVHKVIIPAGEKTKTFEQYQETLEYILSHHVTRNTAIIAVGGGATGDFAGFIAATLLRGVHFIQVPTTILAHDSSVGGKVGINSKQGKNLIGAFYRPTAVIYDLDFLKTLPFEQILSGYAEVYKHALLNGESATQDIEQHFKDREILQSLNGMDKYIAKGIETKLDIVIADEKEQGVRKFLNLGHTFGHAVEYYHKIPHGHAVMVGIIYQFIVANALFDSKHDINHYIQYLIQLGYPLDMITDLDFETLYQYMLSDKKNDKQGVQMVLIRQFGDIVVQHVDQLTLQHACEQLKTYFK</sequence>
<dbReference type="EC" id="4.2.3.4" evidence="1"/>
<dbReference type="EMBL" id="AP009351">
    <property type="protein sequence ID" value="BAF67648.1"/>
    <property type="molecule type" value="Genomic_DNA"/>
</dbReference>
<dbReference type="RefSeq" id="WP_000776323.1">
    <property type="nucleotide sequence ID" value="NZ_JBBIAE010000001.1"/>
</dbReference>
<dbReference type="SMR" id="A6QH16"/>
<dbReference type="KEGG" id="sae:NWMN_1376"/>
<dbReference type="HOGENOM" id="CLU_001201_0_1_9"/>
<dbReference type="UniPathway" id="UPA00053">
    <property type="reaction ID" value="UER00085"/>
</dbReference>
<dbReference type="Proteomes" id="UP000006386">
    <property type="component" value="Chromosome"/>
</dbReference>
<dbReference type="GO" id="GO:0005737">
    <property type="term" value="C:cytoplasm"/>
    <property type="evidence" value="ECO:0007669"/>
    <property type="project" value="UniProtKB-SubCell"/>
</dbReference>
<dbReference type="GO" id="GO:0003856">
    <property type="term" value="F:3-dehydroquinate synthase activity"/>
    <property type="evidence" value="ECO:0007669"/>
    <property type="project" value="UniProtKB-UniRule"/>
</dbReference>
<dbReference type="GO" id="GO:0046872">
    <property type="term" value="F:metal ion binding"/>
    <property type="evidence" value="ECO:0007669"/>
    <property type="project" value="UniProtKB-KW"/>
</dbReference>
<dbReference type="GO" id="GO:0000166">
    <property type="term" value="F:nucleotide binding"/>
    <property type="evidence" value="ECO:0007669"/>
    <property type="project" value="UniProtKB-KW"/>
</dbReference>
<dbReference type="GO" id="GO:0008652">
    <property type="term" value="P:amino acid biosynthetic process"/>
    <property type="evidence" value="ECO:0007669"/>
    <property type="project" value="UniProtKB-KW"/>
</dbReference>
<dbReference type="GO" id="GO:0009073">
    <property type="term" value="P:aromatic amino acid family biosynthetic process"/>
    <property type="evidence" value="ECO:0007669"/>
    <property type="project" value="UniProtKB-KW"/>
</dbReference>
<dbReference type="GO" id="GO:0009423">
    <property type="term" value="P:chorismate biosynthetic process"/>
    <property type="evidence" value="ECO:0007669"/>
    <property type="project" value="UniProtKB-UniRule"/>
</dbReference>
<dbReference type="FunFam" id="1.20.1090.10:FF:000016">
    <property type="entry name" value="3-dehydroquinate synthase"/>
    <property type="match status" value="1"/>
</dbReference>
<dbReference type="FunFam" id="3.40.50.1970:FF:000019">
    <property type="entry name" value="3-dehydroquinate synthase"/>
    <property type="match status" value="1"/>
</dbReference>
<dbReference type="Gene3D" id="3.40.50.1970">
    <property type="match status" value="1"/>
</dbReference>
<dbReference type="Gene3D" id="1.20.1090.10">
    <property type="entry name" value="Dehydroquinate synthase-like - alpha domain"/>
    <property type="match status" value="1"/>
</dbReference>
<dbReference type="HAMAP" id="MF_00110">
    <property type="entry name" value="DHQ_synthase"/>
    <property type="match status" value="1"/>
</dbReference>
<dbReference type="InterPro" id="IPR050071">
    <property type="entry name" value="Dehydroquinate_synthase"/>
</dbReference>
<dbReference type="InterPro" id="IPR016037">
    <property type="entry name" value="DHQ_synth_AroB"/>
</dbReference>
<dbReference type="InterPro" id="IPR030963">
    <property type="entry name" value="DHQ_synth_fam"/>
</dbReference>
<dbReference type="InterPro" id="IPR030960">
    <property type="entry name" value="DHQS/DOIS_N"/>
</dbReference>
<dbReference type="InterPro" id="IPR056179">
    <property type="entry name" value="DHQS_C"/>
</dbReference>
<dbReference type="NCBIfam" id="TIGR01357">
    <property type="entry name" value="aroB"/>
    <property type="match status" value="1"/>
</dbReference>
<dbReference type="PANTHER" id="PTHR43622">
    <property type="entry name" value="3-DEHYDROQUINATE SYNTHASE"/>
    <property type="match status" value="1"/>
</dbReference>
<dbReference type="PANTHER" id="PTHR43622:SF7">
    <property type="entry name" value="3-DEHYDROQUINATE SYNTHASE, CHLOROPLASTIC"/>
    <property type="match status" value="1"/>
</dbReference>
<dbReference type="Pfam" id="PF01761">
    <property type="entry name" value="DHQ_synthase"/>
    <property type="match status" value="1"/>
</dbReference>
<dbReference type="Pfam" id="PF24621">
    <property type="entry name" value="DHQS_C"/>
    <property type="match status" value="1"/>
</dbReference>
<dbReference type="PIRSF" id="PIRSF001455">
    <property type="entry name" value="DHQ_synth"/>
    <property type="match status" value="1"/>
</dbReference>
<dbReference type="SUPFAM" id="SSF56796">
    <property type="entry name" value="Dehydroquinate synthase-like"/>
    <property type="match status" value="1"/>
</dbReference>
<evidence type="ECO:0000255" key="1">
    <source>
        <dbReference type="HAMAP-Rule" id="MF_00110"/>
    </source>
</evidence>
<reference key="1">
    <citation type="journal article" date="2008" name="J. Bacteriol.">
        <title>Genome sequence of Staphylococcus aureus strain Newman and comparative analysis of staphylococcal genomes: polymorphism and evolution of two major pathogenicity islands.</title>
        <authorList>
            <person name="Baba T."/>
            <person name="Bae T."/>
            <person name="Schneewind O."/>
            <person name="Takeuchi F."/>
            <person name="Hiramatsu K."/>
        </authorList>
    </citation>
    <scope>NUCLEOTIDE SEQUENCE [LARGE SCALE GENOMIC DNA]</scope>
    <source>
        <strain>Newman</strain>
    </source>
</reference>
<accession>A6QH16</accession>
<organism>
    <name type="scientific">Staphylococcus aureus (strain Newman)</name>
    <dbReference type="NCBI Taxonomy" id="426430"/>
    <lineage>
        <taxon>Bacteria</taxon>
        <taxon>Bacillati</taxon>
        <taxon>Bacillota</taxon>
        <taxon>Bacilli</taxon>
        <taxon>Bacillales</taxon>
        <taxon>Staphylococcaceae</taxon>
        <taxon>Staphylococcus</taxon>
    </lineage>
</organism>
<keyword id="KW-0028">Amino-acid biosynthesis</keyword>
<keyword id="KW-0057">Aromatic amino acid biosynthesis</keyword>
<keyword id="KW-0170">Cobalt</keyword>
<keyword id="KW-0963">Cytoplasm</keyword>
<keyword id="KW-0456">Lyase</keyword>
<keyword id="KW-0479">Metal-binding</keyword>
<keyword id="KW-0520">NAD</keyword>
<keyword id="KW-0547">Nucleotide-binding</keyword>
<keyword id="KW-0862">Zinc</keyword>
<protein>
    <recommendedName>
        <fullName evidence="1">3-dehydroquinate synthase</fullName>
        <shortName evidence="1">DHQS</shortName>
        <ecNumber evidence="1">4.2.3.4</ecNumber>
    </recommendedName>
</protein>
<proteinExistence type="inferred from homology"/>
<comment type="function">
    <text evidence="1">Catalyzes the conversion of 3-deoxy-D-arabino-heptulosonate 7-phosphate (DAHP) to dehydroquinate (DHQ).</text>
</comment>
<comment type="catalytic activity">
    <reaction evidence="1">
        <text>7-phospho-2-dehydro-3-deoxy-D-arabino-heptonate = 3-dehydroquinate + phosphate</text>
        <dbReference type="Rhea" id="RHEA:21968"/>
        <dbReference type="ChEBI" id="CHEBI:32364"/>
        <dbReference type="ChEBI" id="CHEBI:43474"/>
        <dbReference type="ChEBI" id="CHEBI:58394"/>
        <dbReference type="EC" id="4.2.3.4"/>
    </reaction>
</comment>
<comment type="cofactor">
    <cofactor evidence="1">
        <name>Co(2+)</name>
        <dbReference type="ChEBI" id="CHEBI:48828"/>
    </cofactor>
    <cofactor evidence="1">
        <name>Zn(2+)</name>
        <dbReference type="ChEBI" id="CHEBI:29105"/>
    </cofactor>
    <text evidence="1">Binds 1 divalent metal cation per subunit. Can use either Co(2+) or Zn(2+).</text>
</comment>
<comment type="cofactor">
    <cofactor evidence="1">
        <name>NAD(+)</name>
        <dbReference type="ChEBI" id="CHEBI:57540"/>
    </cofactor>
</comment>
<comment type="pathway">
    <text evidence="1">Metabolic intermediate biosynthesis; chorismate biosynthesis; chorismate from D-erythrose 4-phosphate and phosphoenolpyruvate: step 2/7.</text>
</comment>
<comment type="subcellular location">
    <subcellularLocation>
        <location evidence="1">Cytoplasm</location>
    </subcellularLocation>
</comment>
<comment type="similarity">
    <text evidence="1">Belongs to the sugar phosphate cyclases superfamily. Dehydroquinate synthase family.</text>
</comment>
<feature type="chain" id="PRO_1000094631" description="3-dehydroquinate synthase">
    <location>
        <begin position="1"/>
        <end position="354"/>
    </location>
</feature>
<feature type="binding site" evidence="1">
    <location>
        <begin position="100"/>
        <end position="104"/>
    </location>
    <ligand>
        <name>NAD(+)</name>
        <dbReference type="ChEBI" id="CHEBI:57540"/>
    </ligand>
</feature>
<feature type="binding site" evidence="1">
    <location>
        <begin position="124"/>
        <end position="125"/>
    </location>
    <ligand>
        <name>NAD(+)</name>
        <dbReference type="ChEBI" id="CHEBI:57540"/>
    </ligand>
</feature>
<feature type="binding site" evidence="1">
    <location>
        <position position="136"/>
    </location>
    <ligand>
        <name>NAD(+)</name>
        <dbReference type="ChEBI" id="CHEBI:57540"/>
    </ligand>
</feature>
<feature type="binding site" evidence="1">
    <location>
        <position position="145"/>
    </location>
    <ligand>
        <name>NAD(+)</name>
        <dbReference type="ChEBI" id="CHEBI:57540"/>
    </ligand>
</feature>
<feature type="binding site" evidence="1">
    <location>
        <begin position="163"/>
        <end position="166"/>
    </location>
    <ligand>
        <name>NAD(+)</name>
        <dbReference type="ChEBI" id="CHEBI:57540"/>
    </ligand>
</feature>
<feature type="binding site" evidence="1">
    <location>
        <position position="178"/>
    </location>
    <ligand>
        <name>Zn(2+)</name>
        <dbReference type="ChEBI" id="CHEBI:29105"/>
    </ligand>
</feature>
<feature type="binding site" evidence="1">
    <location>
        <position position="242"/>
    </location>
    <ligand>
        <name>Zn(2+)</name>
        <dbReference type="ChEBI" id="CHEBI:29105"/>
    </ligand>
</feature>
<feature type="binding site" evidence="1">
    <location>
        <position position="256"/>
    </location>
    <ligand>
        <name>Zn(2+)</name>
        <dbReference type="ChEBI" id="CHEBI:29105"/>
    </ligand>
</feature>